<accession>Q1KKR8</accession>
<proteinExistence type="inferred from homology"/>
<evidence type="ECO:0000250" key="1"/>
<evidence type="ECO:0000255" key="2">
    <source>
        <dbReference type="PROSITE-ProRule" id="PRU00108"/>
    </source>
</evidence>
<evidence type="ECO:0000256" key="3">
    <source>
        <dbReference type="SAM" id="MobiDB-lite"/>
    </source>
</evidence>
<evidence type="ECO:0000305" key="4"/>
<gene>
    <name type="primary">hoxd11b</name>
</gene>
<organism>
    <name type="scientific">Takifugu rubripes</name>
    <name type="common">Japanese pufferfish</name>
    <name type="synonym">Fugu rubripes</name>
    <dbReference type="NCBI Taxonomy" id="31033"/>
    <lineage>
        <taxon>Eukaryota</taxon>
        <taxon>Metazoa</taxon>
        <taxon>Chordata</taxon>
        <taxon>Craniata</taxon>
        <taxon>Vertebrata</taxon>
        <taxon>Euteleostomi</taxon>
        <taxon>Actinopterygii</taxon>
        <taxon>Neopterygii</taxon>
        <taxon>Teleostei</taxon>
        <taxon>Neoteleostei</taxon>
        <taxon>Acanthomorphata</taxon>
        <taxon>Eupercaria</taxon>
        <taxon>Tetraodontiformes</taxon>
        <taxon>Tetradontoidea</taxon>
        <taxon>Tetraodontidae</taxon>
        <taxon>Takifugu</taxon>
    </lineage>
</organism>
<protein>
    <recommendedName>
        <fullName>Homeobox protein Hox-D11b</fullName>
    </recommendedName>
</protein>
<keyword id="KW-0217">Developmental protein</keyword>
<keyword id="KW-0238">DNA-binding</keyword>
<keyword id="KW-0371">Homeobox</keyword>
<keyword id="KW-0539">Nucleus</keyword>
<keyword id="KW-1185">Reference proteome</keyword>
<keyword id="KW-0804">Transcription</keyword>
<keyword id="KW-0805">Transcription regulation</keyword>
<sequence length="260" mass="29615">MFSSSFSYPSKTSPLTSPFLAEHSSASGRRLEHRSLCDHEPRHQYRPPWEWNPYPTNGPIASPTCFDFPQDHQGLPSPSGVIFNPSDRFLYAPSGPHFQRGFPAEPRALLGRYSAFGSDSQLFFHDGRNRVLPPGFDQFFDYAAEGMKERITPGIRPGQVDPAEWLRSPDGESSEERAGTDSVEAPEEKEDAHSSGGCGEKPCTRRKKRCPYSKQQIIELEREFLFNIYINKDRRMQLSHLLRLTDRCVNNPLNQDSFFT</sequence>
<name>HXDBB_TAKRU</name>
<feature type="chain" id="PRO_0000266001" description="Homeobox protein Hox-D11b">
    <location>
        <begin position="1"/>
        <end position="260"/>
    </location>
</feature>
<feature type="DNA-binding region" description="Homeobox; truncated" evidence="2">
    <location>
        <begin position="205"/>
        <end position="260"/>
    </location>
</feature>
<feature type="region of interest" description="Disordered" evidence="3">
    <location>
        <begin position="1"/>
        <end position="21"/>
    </location>
</feature>
<feature type="region of interest" description="Disordered" evidence="3">
    <location>
        <begin position="151"/>
        <end position="206"/>
    </location>
</feature>
<feature type="compositionally biased region" description="Low complexity" evidence="3">
    <location>
        <begin position="1"/>
        <end position="14"/>
    </location>
</feature>
<feature type="compositionally biased region" description="Basic and acidic residues" evidence="3">
    <location>
        <begin position="167"/>
        <end position="179"/>
    </location>
</feature>
<dbReference type="EMBL" id="DQ481669">
    <property type="protein sequence ID" value="ABF22476.1"/>
    <property type="molecule type" value="Genomic_DNA"/>
</dbReference>
<dbReference type="SMR" id="Q1KKR8"/>
<dbReference type="STRING" id="31033.ENSTRUP00000059617"/>
<dbReference type="eggNOG" id="KOG0487">
    <property type="taxonomic scope" value="Eukaryota"/>
</dbReference>
<dbReference type="eggNOG" id="KOG3645">
    <property type="taxonomic scope" value="Eukaryota"/>
</dbReference>
<dbReference type="InParanoid" id="Q1KKR8"/>
<dbReference type="Proteomes" id="UP000005226">
    <property type="component" value="Unplaced"/>
</dbReference>
<dbReference type="GO" id="GO:0005634">
    <property type="term" value="C:nucleus"/>
    <property type="evidence" value="ECO:0007669"/>
    <property type="project" value="UniProtKB-SubCell"/>
</dbReference>
<dbReference type="GO" id="GO:0000981">
    <property type="term" value="F:DNA-binding transcription factor activity, RNA polymerase II-specific"/>
    <property type="evidence" value="ECO:0007669"/>
    <property type="project" value="TreeGrafter"/>
</dbReference>
<dbReference type="GO" id="GO:0000978">
    <property type="term" value="F:RNA polymerase II cis-regulatory region sequence-specific DNA binding"/>
    <property type="evidence" value="ECO:0007669"/>
    <property type="project" value="TreeGrafter"/>
</dbReference>
<dbReference type="CDD" id="cd00086">
    <property type="entry name" value="homeodomain"/>
    <property type="match status" value="1"/>
</dbReference>
<dbReference type="Gene3D" id="1.10.10.60">
    <property type="entry name" value="Homeodomain-like"/>
    <property type="match status" value="1"/>
</dbReference>
<dbReference type="InterPro" id="IPR001356">
    <property type="entry name" value="HD"/>
</dbReference>
<dbReference type="InterPro" id="IPR009057">
    <property type="entry name" value="Homeodomain-like_sf"/>
</dbReference>
<dbReference type="PANTHER" id="PTHR46092">
    <property type="entry name" value="HOMEOBOX PROTEIN HOX-A11-RELATED"/>
    <property type="match status" value="1"/>
</dbReference>
<dbReference type="PANTHER" id="PTHR46092:SF2">
    <property type="entry name" value="HOMEOBOX PROTEIN HOX-D11"/>
    <property type="match status" value="1"/>
</dbReference>
<dbReference type="Pfam" id="PF00046">
    <property type="entry name" value="Homeodomain"/>
    <property type="match status" value="1"/>
</dbReference>
<dbReference type="SMART" id="SM00389">
    <property type="entry name" value="HOX"/>
    <property type="match status" value="1"/>
</dbReference>
<dbReference type="SUPFAM" id="SSF46689">
    <property type="entry name" value="Homeodomain-like"/>
    <property type="match status" value="1"/>
</dbReference>
<dbReference type="PROSITE" id="PS50071">
    <property type="entry name" value="HOMEOBOX_2"/>
    <property type="match status" value="1"/>
</dbReference>
<reference key="1">
    <citation type="journal article" date="2006" name="Proc. Natl. Acad. Sci. U.S.A.">
        <title>Highly conserved syntenic blocks at the vertebrate Hox loci and conserved regulatory elements within and outside Hox gene clusters.</title>
        <authorList>
            <person name="Lee A.P."/>
            <person name="Koh E.G.L."/>
            <person name="Tay A."/>
            <person name="Brenner S."/>
            <person name="Venkatesh B."/>
        </authorList>
    </citation>
    <scope>NUCLEOTIDE SEQUENCE [GENOMIC DNA]</scope>
</reference>
<comment type="function">
    <text evidence="1">Sequence-specific transcription factor which is part of a developmental regulatory system that provides cells with specific positional identities on the anterior-posterior axis.</text>
</comment>
<comment type="subcellular location">
    <subcellularLocation>
        <location evidence="2">Nucleus</location>
    </subcellularLocation>
</comment>
<comment type="similarity">
    <text evidence="4">Belongs to the Abd-B homeobox family.</text>
</comment>